<sequence length="37" mass="4170">MIEVFLFGIVLGLIPITLAGLFVTAYLQYRRGDQLDL</sequence>
<organism>
    <name type="scientific">Jasminum nudiflorum</name>
    <name type="common">Winter jasmine</name>
    <dbReference type="NCBI Taxonomy" id="126431"/>
    <lineage>
        <taxon>Eukaryota</taxon>
        <taxon>Viridiplantae</taxon>
        <taxon>Streptophyta</taxon>
        <taxon>Embryophyta</taxon>
        <taxon>Tracheophyta</taxon>
        <taxon>Spermatophyta</taxon>
        <taxon>Magnoliopsida</taxon>
        <taxon>eudicotyledons</taxon>
        <taxon>Gunneridae</taxon>
        <taxon>Pentapetalae</taxon>
        <taxon>asterids</taxon>
        <taxon>lamiids</taxon>
        <taxon>Lamiales</taxon>
        <taxon>Oleaceae</taxon>
        <taxon>Jasmineae</taxon>
        <taxon>Jasminum</taxon>
    </lineage>
</organism>
<comment type="function">
    <text evidence="1">Component of the cytochrome b6-f complex, which mediates electron transfer between photosystem II (PSII) and photosystem I (PSI), cyclic electron flow around PSI, and state transitions. PetG is required for either the stability or assembly of the cytochrome b6-f complex.</text>
</comment>
<comment type="subunit">
    <text evidence="1">The 4 large subunits of the cytochrome b6-f complex are cytochrome b6, subunit IV (17 kDa polypeptide, PetD), cytochrome f and the Rieske protein, while the 4 small subunits are PetG, PetL, PetM and PetN. The complex functions as a dimer.</text>
</comment>
<comment type="subcellular location">
    <subcellularLocation>
        <location evidence="1">Plastid</location>
        <location evidence="1">Chloroplast thylakoid membrane</location>
        <topology evidence="1">Single-pass membrane protein</topology>
    </subcellularLocation>
</comment>
<comment type="similarity">
    <text evidence="1">Belongs to the PetG family.</text>
</comment>
<gene>
    <name evidence="1" type="primary">petG</name>
    <name type="ORF">JNC0719</name>
</gene>
<proteinExistence type="inferred from homology"/>
<feature type="chain" id="PRO_0000275493" description="Cytochrome b6-f complex subunit 5">
    <location>
        <begin position="1"/>
        <end position="37"/>
    </location>
</feature>
<feature type="transmembrane region" description="Helical" evidence="1">
    <location>
        <begin position="5"/>
        <end position="25"/>
    </location>
</feature>
<dbReference type="EMBL" id="DQ673255">
    <property type="protein sequence ID" value="ABG74646.1"/>
    <property type="molecule type" value="Genomic_DNA"/>
</dbReference>
<dbReference type="RefSeq" id="YP_778508.1">
    <property type="nucleotide sequence ID" value="NC_008407.1"/>
</dbReference>
<dbReference type="SMR" id="Q06RB3"/>
<dbReference type="GeneID" id="4319725"/>
<dbReference type="GO" id="GO:0009535">
    <property type="term" value="C:chloroplast thylakoid membrane"/>
    <property type="evidence" value="ECO:0007669"/>
    <property type="project" value="UniProtKB-SubCell"/>
</dbReference>
<dbReference type="GO" id="GO:0009512">
    <property type="term" value="C:cytochrome b6f complex"/>
    <property type="evidence" value="ECO:0007669"/>
    <property type="project" value="InterPro"/>
</dbReference>
<dbReference type="GO" id="GO:0045158">
    <property type="term" value="F:electron transporter, transferring electrons within cytochrome b6/f complex of photosystem II activity"/>
    <property type="evidence" value="ECO:0007669"/>
    <property type="project" value="UniProtKB-UniRule"/>
</dbReference>
<dbReference type="GO" id="GO:0017004">
    <property type="term" value="P:cytochrome complex assembly"/>
    <property type="evidence" value="ECO:0007669"/>
    <property type="project" value="UniProtKB-UniRule"/>
</dbReference>
<dbReference type="GO" id="GO:0015979">
    <property type="term" value="P:photosynthesis"/>
    <property type="evidence" value="ECO:0007669"/>
    <property type="project" value="UniProtKB-KW"/>
</dbReference>
<dbReference type="HAMAP" id="MF_00432">
    <property type="entry name" value="Cytb6_f_PetG"/>
    <property type="match status" value="1"/>
</dbReference>
<dbReference type="InterPro" id="IPR003683">
    <property type="entry name" value="Cyt_6/f_cplx_su5"/>
</dbReference>
<dbReference type="InterPro" id="IPR036099">
    <property type="entry name" value="Cyt_6/f_cplx_su5_sf"/>
</dbReference>
<dbReference type="NCBIfam" id="NF001907">
    <property type="entry name" value="PRK00665.1"/>
    <property type="match status" value="1"/>
</dbReference>
<dbReference type="Pfam" id="PF02529">
    <property type="entry name" value="PetG"/>
    <property type="match status" value="1"/>
</dbReference>
<dbReference type="PIRSF" id="PIRSF000034">
    <property type="entry name" value="Cyt_b6-f_V"/>
    <property type="match status" value="1"/>
</dbReference>
<dbReference type="SUPFAM" id="SSF103446">
    <property type="entry name" value="PetG subunit of the cytochrome b6f complex"/>
    <property type="match status" value="1"/>
</dbReference>
<evidence type="ECO:0000255" key="1">
    <source>
        <dbReference type="HAMAP-Rule" id="MF_00432"/>
    </source>
</evidence>
<name>PETG_JASNU</name>
<keyword id="KW-0150">Chloroplast</keyword>
<keyword id="KW-0249">Electron transport</keyword>
<keyword id="KW-0472">Membrane</keyword>
<keyword id="KW-0602">Photosynthesis</keyword>
<keyword id="KW-0934">Plastid</keyword>
<keyword id="KW-0793">Thylakoid</keyword>
<keyword id="KW-0812">Transmembrane</keyword>
<keyword id="KW-1133">Transmembrane helix</keyword>
<keyword id="KW-0813">Transport</keyword>
<accession>Q06RB3</accession>
<geneLocation type="chloroplast"/>
<reference key="1">
    <citation type="journal article" date="2007" name="Mol. Biol. Evol.">
        <title>Gene relocations within chloroplast genomes of Jasminum and Menodora (Oleaceae) are due to multiple, overlapping inversions.</title>
        <authorList>
            <person name="Lee H.-L."/>
            <person name="Jansen R.K."/>
            <person name="Chumley T.W."/>
            <person name="Kim K.-J."/>
        </authorList>
    </citation>
    <scope>NUCLEOTIDE SEQUENCE [LARGE SCALE GENOMIC DNA]</scope>
</reference>
<protein>
    <recommendedName>
        <fullName evidence="1">Cytochrome b6-f complex subunit 5</fullName>
    </recommendedName>
    <alternativeName>
        <fullName evidence="1">Cytochrome b6-f complex subunit PetG</fullName>
    </alternativeName>
    <alternativeName>
        <fullName evidence="1">Cytochrome b6-f complex subunit V</fullName>
    </alternativeName>
</protein>